<comment type="function">
    <text evidence="5">The production of the second messenger molecules diacylglycerol (DAG) and inositol 1,4,5-trisphosphate (IP3) is mediated by activated phosphatidylinositol-specific phospholipase C enzymes.</text>
</comment>
<comment type="catalytic activity">
    <reaction>
        <text>a 1,2-diacyl-sn-glycero-3-phospho-(1D-myo-inositol-4,5-bisphosphate) + H2O = 1D-myo-inositol 1,4,5-trisphosphate + a 1,2-diacyl-sn-glycerol + H(+)</text>
        <dbReference type="Rhea" id="RHEA:33179"/>
        <dbReference type="ChEBI" id="CHEBI:15377"/>
        <dbReference type="ChEBI" id="CHEBI:15378"/>
        <dbReference type="ChEBI" id="CHEBI:17815"/>
        <dbReference type="ChEBI" id="CHEBI:58456"/>
        <dbReference type="ChEBI" id="CHEBI:203600"/>
        <dbReference type="EC" id="3.1.4.11"/>
    </reaction>
</comment>
<comment type="cofactor">
    <cofactor evidence="2">
        <name>Ca(2+)</name>
        <dbReference type="ChEBI" id="CHEBI:29108"/>
    </cofactor>
</comment>
<comment type="subcellular location">
    <subcellularLocation>
        <location evidence="1">Cell membrane</location>
        <topology evidence="1">Peripheral membrane protein</topology>
    </subcellularLocation>
</comment>
<comment type="tissue specificity">
    <text evidence="5">Expressed in leaves, roots and siliques, but not in flowers.</text>
</comment>
<comment type="induction">
    <text>Not induced by environmental stresses such as dehydration, salinity and low temperature.</text>
</comment>
<comment type="sequence caution" evidence="6">
    <conflict type="erroneous initiation">
        <sequence resource="EMBL-CDS" id="AAC48991"/>
    </conflict>
    <text>Truncated N-terminus.</text>
</comment>
<comment type="sequence caution" evidence="6">
    <conflict type="frameshift">
        <sequence resource="EMBL-CDS" id="AAC48991"/>
    </conflict>
</comment>
<comment type="sequence caution" evidence="6">
    <conflict type="erroneous gene model prediction">
        <sequence resource="EMBL-CDS" id="CAB37509"/>
    </conflict>
</comment>
<comment type="sequence caution" evidence="6">
    <conflict type="erroneous gene model prediction">
        <sequence resource="EMBL-CDS" id="CAB80517"/>
    </conflict>
</comment>
<dbReference type="EC" id="3.1.4.11"/>
<dbReference type="EMBL" id="AL035540">
    <property type="protein sequence ID" value="CAB37509.1"/>
    <property type="status" value="ALT_SEQ"/>
    <property type="molecule type" value="Genomic_DNA"/>
</dbReference>
<dbReference type="EMBL" id="AL161593">
    <property type="protein sequence ID" value="CAB80517.1"/>
    <property type="status" value="ALT_SEQ"/>
    <property type="molecule type" value="Genomic_DNA"/>
</dbReference>
<dbReference type="EMBL" id="CP002687">
    <property type="protein sequence ID" value="AEE86943.1"/>
    <property type="molecule type" value="Genomic_DNA"/>
</dbReference>
<dbReference type="EMBL" id="AK222239">
    <property type="protein sequence ID" value="BAD95426.1"/>
    <property type="molecule type" value="mRNA"/>
</dbReference>
<dbReference type="EMBL" id="U13203">
    <property type="protein sequence ID" value="AAC48991.1"/>
    <property type="status" value="ALT_SEQ"/>
    <property type="molecule type" value="mRNA"/>
</dbReference>
<dbReference type="PIR" id="T05681">
    <property type="entry name" value="T05681"/>
</dbReference>
<dbReference type="RefSeq" id="NP_195565.2">
    <property type="nucleotide sequence ID" value="NM_120014.5"/>
</dbReference>
<dbReference type="SMR" id="Q56W08"/>
<dbReference type="FunCoup" id="Q56W08">
    <property type="interactions" value="781"/>
</dbReference>
<dbReference type="STRING" id="3702.Q56W08"/>
<dbReference type="PaxDb" id="3702-AT4G38530.1"/>
<dbReference type="ProteomicsDB" id="235008"/>
<dbReference type="EnsemblPlants" id="AT4G38530.1">
    <property type="protein sequence ID" value="AT4G38530.1"/>
    <property type="gene ID" value="AT4G38530"/>
</dbReference>
<dbReference type="GeneID" id="830010"/>
<dbReference type="Gramene" id="AT4G38530.1">
    <property type="protein sequence ID" value="AT4G38530.1"/>
    <property type="gene ID" value="AT4G38530"/>
</dbReference>
<dbReference type="KEGG" id="ath:AT4G38530"/>
<dbReference type="Araport" id="AT4G38530"/>
<dbReference type="TAIR" id="AT4G38530">
    <property type="gene designation" value="PLC1"/>
</dbReference>
<dbReference type="eggNOG" id="KOG0169">
    <property type="taxonomic scope" value="Eukaryota"/>
</dbReference>
<dbReference type="HOGENOM" id="CLU_002738_3_2_1"/>
<dbReference type="InParanoid" id="Q56W08"/>
<dbReference type="OMA" id="YVQDIFH"/>
<dbReference type="PhylomeDB" id="Q56W08"/>
<dbReference type="BioCyc" id="ARA:AT4G38530-MONOMER"/>
<dbReference type="BRENDA" id="3.1.4.11">
    <property type="organism ID" value="399"/>
</dbReference>
<dbReference type="PRO" id="PR:Q56W08"/>
<dbReference type="Proteomes" id="UP000006548">
    <property type="component" value="Chromosome 4"/>
</dbReference>
<dbReference type="ExpressionAtlas" id="Q56W08">
    <property type="expression patterns" value="baseline and differential"/>
</dbReference>
<dbReference type="GO" id="GO:0005886">
    <property type="term" value="C:plasma membrane"/>
    <property type="evidence" value="ECO:0007669"/>
    <property type="project" value="UniProtKB-SubCell"/>
</dbReference>
<dbReference type="GO" id="GO:0046872">
    <property type="term" value="F:metal ion binding"/>
    <property type="evidence" value="ECO:0007669"/>
    <property type="project" value="UniProtKB-KW"/>
</dbReference>
<dbReference type="GO" id="GO:0004435">
    <property type="term" value="F:phosphatidylinositol-4,5-bisphosphate phospholipase C activity"/>
    <property type="evidence" value="ECO:0007669"/>
    <property type="project" value="UniProtKB-EC"/>
</dbReference>
<dbReference type="GO" id="GO:0035556">
    <property type="term" value="P:intracellular signal transduction"/>
    <property type="evidence" value="ECO:0007669"/>
    <property type="project" value="InterPro"/>
</dbReference>
<dbReference type="GO" id="GO:0016042">
    <property type="term" value="P:lipid catabolic process"/>
    <property type="evidence" value="ECO:0007669"/>
    <property type="project" value="UniProtKB-KW"/>
</dbReference>
<dbReference type="CDD" id="cd00275">
    <property type="entry name" value="C2_PLC_like"/>
    <property type="match status" value="1"/>
</dbReference>
<dbReference type="FunFam" id="1.10.238.10:FF:000254">
    <property type="entry name" value="Phosphoinositide phospholipase C"/>
    <property type="match status" value="1"/>
</dbReference>
<dbReference type="FunFam" id="2.60.40.150:FF:000060">
    <property type="entry name" value="Phosphoinositide phospholipase C"/>
    <property type="match status" value="1"/>
</dbReference>
<dbReference type="FunFam" id="3.20.20.190:FF:000035">
    <property type="entry name" value="Phosphoinositide phospholipase C"/>
    <property type="match status" value="1"/>
</dbReference>
<dbReference type="Gene3D" id="2.60.40.150">
    <property type="entry name" value="C2 domain"/>
    <property type="match status" value="1"/>
</dbReference>
<dbReference type="Gene3D" id="1.10.238.10">
    <property type="entry name" value="EF-hand"/>
    <property type="match status" value="1"/>
</dbReference>
<dbReference type="Gene3D" id="3.20.20.190">
    <property type="entry name" value="Phosphatidylinositol (PI) phosphodiesterase"/>
    <property type="match status" value="1"/>
</dbReference>
<dbReference type="InterPro" id="IPR000008">
    <property type="entry name" value="C2_dom"/>
</dbReference>
<dbReference type="InterPro" id="IPR035892">
    <property type="entry name" value="C2_domain_sf"/>
</dbReference>
<dbReference type="InterPro" id="IPR011992">
    <property type="entry name" value="EF-hand-dom_pair"/>
</dbReference>
<dbReference type="InterPro" id="IPR001192">
    <property type="entry name" value="PI-PLC_fam"/>
</dbReference>
<dbReference type="InterPro" id="IPR017946">
    <property type="entry name" value="PLC-like_Pdiesterase_TIM-brl"/>
</dbReference>
<dbReference type="InterPro" id="IPR000909">
    <property type="entry name" value="PLipase_C_PInositol-sp_X_dom"/>
</dbReference>
<dbReference type="InterPro" id="IPR001711">
    <property type="entry name" value="PLipase_C_Pinositol-sp_Y"/>
</dbReference>
<dbReference type="PANTHER" id="PTHR10336:SF213">
    <property type="entry name" value="PHOSPHOINOSITIDE PHOSPHOLIPASE C 3"/>
    <property type="match status" value="1"/>
</dbReference>
<dbReference type="PANTHER" id="PTHR10336">
    <property type="entry name" value="PHOSPHOINOSITIDE-SPECIFIC PHOSPHOLIPASE C FAMILY PROTEIN"/>
    <property type="match status" value="1"/>
</dbReference>
<dbReference type="Pfam" id="PF00168">
    <property type="entry name" value="C2"/>
    <property type="match status" value="1"/>
</dbReference>
<dbReference type="Pfam" id="PF00388">
    <property type="entry name" value="PI-PLC-X"/>
    <property type="match status" value="1"/>
</dbReference>
<dbReference type="Pfam" id="PF00387">
    <property type="entry name" value="PI-PLC-Y"/>
    <property type="match status" value="1"/>
</dbReference>
<dbReference type="PRINTS" id="PR00390">
    <property type="entry name" value="PHPHLIPASEC"/>
</dbReference>
<dbReference type="SMART" id="SM00239">
    <property type="entry name" value="C2"/>
    <property type="match status" value="1"/>
</dbReference>
<dbReference type="SMART" id="SM00148">
    <property type="entry name" value="PLCXc"/>
    <property type="match status" value="1"/>
</dbReference>
<dbReference type="SMART" id="SM00149">
    <property type="entry name" value="PLCYc"/>
    <property type="match status" value="1"/>
</dbReference>
<dbReference type="SUPFAM" id="SSF49562">
    <property type="entry name" value="C2 domain (Calcium/lipid-binding domain, CaLB)"/>
    <property type="match status" value="1"/>
</dbReference>
<dbReference type="SUPFAM" id="SSF47473">
    <property type="entry name" value="EF-hand"/>
    <property type="match status" value="1"/>
</dbReference>
<dbReference type="SUPFAM" id="SSF51695">
    <property type="entry name" value="PLC-like phosphodiesterases"/>
    <property type="match status" value="1"/>
</dbReference>
<dbReference type="PROSITE" id="PS50004">
    <property type="entry name" value="C2"/>
    <property type="match status" value="1"/>
</dbReference>
<dbReference type="PROSITE" id="PS50007">
    <property type="entry name" value="PIPLC_X_DOMAIN"/>
    <property type="match status" value="1"/>
</dbReference>
<dbReference type="PROSITE" id="PS50008">
    <property type="entry name" value="PIPLC_Y_DOMAIN"/>
    <property type="match status" value="1"/>
</dbReference>
<proteinExistence type="evidence at transcript level"/>
<gene>
    <name type="primary">PLC3</name>
    <name type="synonym">ATPLC1</name>
    <name type="ordered locus">At4g38530</name>
    <name type="ORF">F20M13.90</name>
</gene>
<reference key="1">
    <citation type="journal article" date="1999" name="Nature">
        <title>Sequence and analysis of chromosome 4 of the plant Arabidopsis thaliana.</title>
        <authorList>
            <person name="Mayer K.F.X."/>
            <person name="Schueller C."/>
            <person name="Wambutt R."/>
            <person name="Murphy G."/>
            <person name="Volckaert G."/>
            <person name="Pohl T."/>
            <person name="Duesterhoeft A."/>
            <person name="Stiekema W."/>
            <person name="Entian K.-D."/>
            <person name="Terryn N."/>
            <person name="Harris B."/>
            <person name="Ansorge W."/>
            <person name="Brandt P."/>
            <person name="Grivell L.A."/>
            <person name="Rieger M."/>
            <person name="Weichselgartner M."/>
            <person name="de Simone V."/>
            <person name="Obermaier B."/>
            <person name="Mache R."/>
            <person name="Mueller M."/>
            <person name="Kreis M."/>
            <person name="Delseny M."/>
            <person name="Puigdomenech P."/>
            <person name="Watson M."/>
            <person name="Schmidtheini T."/>
            <person name="Reichert B."/>
            <person name="Portetelle D."/>
            <person name="Perez-Alonso M."/>
            <person name="Boutry M."/>
            <person name="Bancroft I."/>
            <person name="Vos P."/>
            <person name="Hoheisel J."/>
            <person name="Zimmermann W."/>
            <person name="Wedler H."/>
            <person name="Ridley P."/>
            <person name="Langham S.-A."/>
            <person name="McCullagh B."/>
            <person name="Bilham L."/>
            <person name="Robben J."/>
            <person name="van der Schueren J."/>
            <person name="Grymonprez B."/>
            <person name="Chuang Y.-J."/>
            <person name="Vandenbussche F."/>
            <person name="Braeken M."/>
            <person name="Weltjens I."/>
            <person name="Voet M."/>
            <person name="Bastiaens I."/>
            <person name="Aert R."/>
            <person name="Defoor E."/>
            <person name="Weitzenegger T."/>
            <person name="Bothe G."/>
            <person name="Ramsperger U."/>
            <person name="Hilbert H."/>
            <person name="Braun M."/>
            <person name="Holzer E."/>
            <person name="Brandt A."/>
            <person name="Peters S."/>
            <person name="van Staveren M."/>
            <person name="Dirkse W."/>
            <person name="Mooijman P."/>
            <person name="Klein Lankhorst R."/>
            <person name="Rose M."/>
            <person name="Hauf J."/>
            <person name="Koetter P."/>
            <person name="Berneiser S."/>
            <person name="Hempel S."/>
            <person name="Feldpausch M."/>
            <person name="Lamberth S."/>
            <person name="Van den Daele H."/>
            <person name="De Keyser A."/>
            <person name="Buysshaert C."/>
            <person name="Gielen J."/>
            <person name="Villarroel R."/>
            <person name="De Clercq R."/>
            <person name="van Montagu M."/>
            <person name="Rogers J."/>
            <person name="Cronin A."/>
            <person name="Quail M.A."/>
            <person name="Bray-Allen S."/>
            <person name="Clark L."/>
            <person name="Doggett J."/>
            <person name="Hall S."/>
            <person name="Kay M."/>
            <person name="Lennard N."/>
            <person name="McLay K."/>
            <person name="Mayes R."/>
            <person name="Pettett A."/>
            <person name="Rajandream M.A."/>
            <person name="Lyne M."/>
            <person name="Benes V."/>
            <person name="Rechmann S."/>
            <person name="Borkova D."/>
            <person name="Bloecker H."/>
            <person name="Scharfe M."/>
            <person name="Grimm M."/>
            <person name="Loehnert T.-H."/>
            <person name="Dose S."/>
            <person name="de Haan M."/>
            <person name="Maarse A.C."/>
            <person name="Schaefer M."/>
            <person name="Mueller-Auer S."/>
            <person name="Gabel C."/>
            <person name="Fuchs M."/>
            <person name="Fartmann B."/>
            <person name="Granderath K."/>
            <person name="Dauner D."/>
            <person name="Herzl A."/>
            <person name="Neumann S."/>
            <person name="Argiriou A."/>
            <person name="Vitale D."/>
            <person name="Liguori R."/>
            <person name="Piravandi E."/>
            <person name="Massenet O."/>
            <person name="Quigley F."/>
            <person name="Clabauld G."/>
            <person name="Muendlein A."/>
            <person name="Felber R."/>
            <person name="Schnabl S."/>
            <person name="Hiller R."/>
            <person name="Schmidt W."/>
            <person name="Lecharny A."/>
            <person name="Aubourg S."/>
            <person name="Chefdor F."/>
            <person name="Cooke R."/>
            <person name="Berger C."/>
            <person name="Monfort A."/>
            <person name="Casacuberta E."/>
            <person name="Gibbons T."/>
            <person name="Weber N."/>
            <person name="Vandenbol M."/>
            <person name="Bargues M."/>
            <person name="Terol J."/>
            <person name="Torres A."/>
            <person name="Perez-Perez A."/>
            <person name="Purnelle B."/>
            <person name="Bent E."/>
            <person name="Johnson S."/>
            <person name="Tacon D."/>
            <person name="Jesse T."/>
            <person name="Heijnen L."/>
            <person name="Schwarz S."/>
            <person name="Scholler P."/>
            <person name="Heber S."/>
            <person name="Francs P."/>
            <person name="Bielke C."/>
            <person name="Frishman D."/>
            <person name="Haase D."/>
            <person name="Lemcke K."/>
            <person name="Mewes H.-W."/>
            <person name="Stocker S."/>
            <person name="Zaccaria P."/>
            <person name="Bevan M."/>
            <person name="Wilson R.K."/>
            <person name="de la Bastide M."/>
            <person name="Habermann K."/>
            <person name="Parnell L."/>
            <person name="Dedhia N."/>
            <person name="Gnoj L."/>
            <person name="Schutz K."/>
            <person name="Huang E."/>
            <person name="Spiegel L."/>
            <person name="Sekhon M."/>
            <person name="Murray J."/>
            <person name="Sheet P."/>
            <person name="Cordes M."/>
            <person name="Abu-Threideh J."/>
            <person name="Stoneking T."/>
            <person name="Kalicki J."/>
            <person name="Graves T."/>
            <person name="Harmon G."/>
            <person name="Edwards J."/>
            <person name="Latreille P."/>
            <person name="Courtney L."/>
            <person name="Cloud J."/>
            <person name="Abbott A."/>
            <person name="Scott K."/>
            <person name="Johnson D."/>
            <person name="Minx P."/>
            <person name="Bentley D."/>
            <person name="Fulton B."/>
            <person name="Miller N."/>
            <person name="Greco T."/>
            <person name="Kemp K."/>
            <person name="Kramer J."/>
            <person name="Fulton L."/>
            <person name="Mardis E."/>
            <person name="Dante M."/>
            <person name="Pepin K."/>
            <person name="Hillier L.W."/>
            <person name="Nelson J."/>
            <person name="Spieth J."/>
            <person name="Ryan E."/>
            <person name="Andrews S."/>
            <person name="Geisel C."/>
            <person name="Layman D."/>
            <person name="Du H."/>
            <person name="Ali J."/>
            <person name="Berghoff A."/>
            <person name="Jones K."/>
            <person name="Drone K."/>
            <person name="Cotton M."/>
            <person name="Joshu C."/>
            <person name="Antonoiu B."/>
            <person name="Zidanic M."/>
            <person name="Strong C."/>
            <person name="Sun H."/>
            <person name="Lamar B."/>
            <person name="Yordan C."/>
            <person name="Ma P."/>
            <person name="Zhong J."/>
            <person name="Preston R."/>
            <person name="Vil D."/>
            <person name="Shekher M."/>
            <person name="Matero A."/>
            <person name="Shah R."/>
            <person name="Swaby I.K."/>
            <person name="O'Shaughnessy A."/>
            <person name="Rodriguez M."/>
            <person name="Hoffman J."/>
            <person name="Till S."/>
            <person name="Granat S."/>
            <person name="Shohdy N."/>
            <person name="Hasegawa A."/>
            <person name="Hameed A."/>
            <person name="Lodhi M."/>
            <person name="Johnson A."/>
            <person name="Chen E."/>
            <person name="Marra M.A."/>
            <person name="Martienssen R."/>
            <person name="McCombie W.R."/>
        </authorList>
    </citation>
    <scope>NUCLEOTIDE SEQUENCE [LARGE SCALE GENOMIC DNA]</scope>
    <source>
        <strain>cv. Columbia</strain>
    </source>
</reference>
<reference key="2">
    <citation type="journal article" date="2017" name="Plant J.">
        <title>Araport11: a complete reannotation of the Arabidopsis thaliana reference genome.</title>
        <authorList>
            <person name="Cheng C.Y."/>
            <person name="Krishnakumar V."/>
            <person name="Chan A.P."/>
            <person name="Thibaud-Nissen F."/>
            <person name="Schobel S."/>
            <person name="Town C.D."/>
        </authorList>
    </citation>
    <scope>GENOME REANNOTATION</scope>
    <source>
        <strain>cv. Columbia</strain>
    </source>
</reference>
<reference key="3">
    <citation type="journal article" date="2003" name="Science">
        <title>Empirical analysis of transcriptional activity in the Arabidopsis genome.</title>
        <authorList>
            <person name="Yamada K."/>
            <person name="Lim J."/>
            <person name="Dale J.M."/>
            <person name="Chen H."/>
            <person name="Shinn P."/>
            <person name="Palm C.J."/>
            <person name="Southwick A.M."/>
            <person name="Wu H.C."/>
            <person name="Kim C.J."/>
            <person name="Nguyen M."/>
            <person name="Pham P.K."/>
            <person name="Cheuk R.F."/>
            <person name="Karlin-Newmann G."/>
            <person name="Liu S.X."/>
            <person name="Lam B."/>
            <person name="Sakano H."/>
            <person name="Wu T."/>
            <person name="Yu G."/>
            <person name="Miranda M."/>
            <person name="Quach H.L."/>
            <person name="Tripp M."/>
            <person name="Chang C.H."/>
            <person name="Lee J.M."/>
            <person name="Toriumi M.J."/>
            <person name="Chan M.M."/>
            <person name="Tang C.C."/>
            <person name="Onodera C.S."/>
            <person name="Deng J.M."/>
            <person name="Akiyama K."/>
            <person name="Ansari Y."/>
            <person name="Arakawa T."/>
            <person name="Banh J."/>
            <person name="Banno F."/>
            <person name="Bowser L."/>
            <person name="Brooks S.Y."/>
            <person name="Carninci P."/>
            <person name="Chao Q."/>
            <person name="Choy N."/>
            <person name="Enju A."/>
            <person name="Goldsmith A.D."/>
            <person name="Gurjal M."/>
            <person name="Hansen N.F."/>
            <person name="Hayashizaki Y."/>
            <person name="Johnson-Hopson C."/>
            <person name="Hsuan V.W."/>
            <person name="Iida K."/>
            <person name="Karnes M."/>
            <person name="Khan S."/>
            <person name="Koesema E."/>
            <person name="Ishida J."/>
            <person name="Jiang P.X."/>
            <person name="Jones T."/>
            <person name="Kawai J."/>
            <person name="Kamiya A."/>
            <person name="Meyers C."/>
            <person name="Nakajima M."/>
            <person name="Narusaka M."/>
            <person name="Seki M."/>
            <person name="Sakurai T."/>
            <person name="Satou M."/>
            <person name="Tamse R."/>
            <person name="Vaysberg M."/>
            <person name="Wallender E.K."/>
            <person name="Wong C."/>
            <person name="Yamamura Y."/>
            <person name="Yuan S."/>
            <person name="Shinozaki K."/>
            <person name="Davis R.W."/>
            <person name="Theologis A."/>
            <person name="Ecker J.R."/>
        </authorList>
    </citation>
    <scope>NUCLEOTIDE SEQUENCE [LARGE SCALE MRNA]</scope>
    <source>
        <strain>cv. Columbia</strain>
    </source>
</reference>
<reference key="4">
    <citation type="journal article" date="1995" name="Plant Physiol.">
        <title>An Arabidopsis cDNA related to animal phosphoinositide-specific phospholipase C genes.</title>
        <authorList>
            <person name="Yamamoto Y.T."/>
            <person name="Conkling M.A."/>
            <person name="Sussex I.M."/>
            <person name="Irish V.F."/>
        </authorList>
    </citation>
    <scope>NUCLEOTIDE SEQUENCE [MRNA] OF 3-564</scope>
    <source>
        <strain>cv. Landsberg erecta</strain>
        <tissue>Shoot</tissue>
    </source>
</reference>
<reference key="5">
    <citation type="journal article" date="2002" name="Plant Physiol.">
        <title>Inositol phospholipid metabolism in Arabidopsis. Characterized and putative isoforms of inositol phospholipid kinase and phosphoinositide-specific phospholipase C.</title>
        <authorList>
            <person name="Mueller-Roeber B."/>
            <person name="Pical C."/>
        </authorList>
    </citation>
    <scope>GENE FAMILY</scope>
    <scope>LACK OF INDUCTION</scope>
    <scope>NOMENCLATURE</scope>
</reference>
<reference key="6">
    <citation type="journal article" date="2004" name="New Phytol.">
        <title>Gene-specific expression and calcium activation of Arabidopsis thaliana phospholipase C isoforms.</title>
        <authorList>
            <person name="Hunt L."/>
            <person name="Otterhag L."/>
            <person name="Lee J.C."/>
            <person name="Lasheen T."/>
            <person name="Hunt J."/>
            <person name="Seki M."/>
            <person name="Shinozaki K."/>
            <person name="Sommarin M."/>
            <person name="Gilmour D.J."/>
            <person name="Pical C."/>
            <person name="Gray J.E."/>
        </authorList>
        <dbReference type="AGRICOLA" id="IND43668249"/>
    </citation>
    <scope>FUNCTION</scope>
    <scope>TISSUE SPECIFICITY</scope>
</reference>
<keyword id="KW-0106">Calcium</keyword>
<keyword id="KW-1003">Cell membrane</keyword>
<keyword id="KW-0378">Hydrolase</keyword>
<keyword id="KW-0442">Lipid degradation</keyword>
<keyword id="KW-0443">Lipid metabolism</keyword>
<keyword id="KW-0472">Membrane</keyword>
<keyword id="KW-0479">Metal-binding</keyword>
<keyword id="KW-1185">Reference proteome</keyword>
<keyword id="KW-0807">Transducer</keyword>
<sequence>MSESFKVCFCCSRSFKEKTRQPPVSIKRLFEAYSRNGKMSFDELLRFVSEVQGERHAGLDYVQDIFHSVKHHNVFHHHGLVHLNAFYRYLFSDTNSPLPMSGQVHHDMKAPLSHYFVYTGHNSYLTGNQVNSRSSVEPIVQALRKGVKVIELDLWPNPSGNAAEVRHGRTLTSHEDLQKCLTAIKDNAFHVSDYPVIITLEDHLPPKLQAQVAKMLTKTYRGMLFRRVSESFKHFPSPEELKGKILISTKPPKEYLESKTVHTTRTPTVKETSWNRVANKILEEYKDMESEAVGYRDLIAIHAANCKDPSKDCLSDDPEKPIRVSMDEQWLDTMVRTRGTDLVRFTQRNLVRIYPKGTRVDSSNYDPHVGWTHGAQMVAFNMQGHGKQLWIMQGMFRGNGGCGYVKKPRILLDEHTLFDPCKRFPIKTTLKVKIYTGEGWDLDFHHTHFDQYSPPDFFVKIGIAGVPRDTVSYRTETAVDQWFPIWGNDEFLFQLSVPELALLWFKVQDYDNDTQNDFAGQTCLPLPELKSGVRAVRLHDRTGKAYKNTRLLVSFALDPPYTFR</sequence>
<accession>Q56W08</accession>
<accession>Q38811</accession>
<accession>Q9SZN3</accession>
<organism>
    <name type="scientific">Arabidopsis thaliana</name>
    <name type="common">Mouse-ear cress</name>
    <dbReference type="NCBI Taxonomy" id="3702"/>
    <lineage>
        <taxon>Eukaryota</taxon>
        <taxon>Viridiplantae</taxon>
        <taxon>Streptophyta</taxon>
        <taxon>Embryophyta</taxon>
        <taxon>Tracheophyta</taxon>
        <taxon>Spermatophyta</taxon>
        <taxon>Magnoliopsida</taxon>
        <taxon>eudicotyledons</taxon>
        <taxon>Gunneridae</taxon>
        <taxon>Pentapetalae</taxon>
        <taxon>rosids</taxon>
        <taxon>malvids</taxon>
        <taxon>Brassicales</taxon>
        <taxon>Brassicaceae</taxon>
        <taxon>Camelineae</taxon>
        <taxon>Arabidopsis</taxon>
    </lineage>
</organism>
<name>PLCD3_ARATH</name>
<feature type="chain" id="PRO_0000324128" description="Phosphoinositide phospholipase C 3">
    <location>
        <begin position="1"/>
        <end position="564"/>
    </location>
</feature>
<feature type="domain" description="EF-hand">
    <location>
        <begin position="19"/>
        <end position="54"/>
    </location>
</feature>
<feature type="domain" description="PI-PLC X-box" evidence="3">
    <location>
        <begin position="106"/>
        <end position="250"/>
    </location>
</feature>
<feature type="domain" description="PI-PLC Y-box" evidence="4">
    <location>
        <begin position="296"/>
        <end position="412"/>
    </location>
</feature>
<feature type="domain" description="C2" evidence="2">
    <location>
        <begin position="406"/>
        <end position="539"/>
    </location>
</feature>
<feature type="active site" evidence="3">
    <location>
        <position position="121"/>
    </location>
</feature>
<feature type="active site" evidence="3">
    <location>
        <position position="167"/>
    </location>
</feature>
<feature type="binding site" evidence="2">
    <location>
        <position position="450"/>
    </location>
    <ligand>
        <name>Ca(2+)</name>
        <dbReference type="ChEBI" id="CHEBI:29108"/>
        <label>1</label>
    </ligand>
</feature>
<feature type="binding site" evidence="2">
    <location>
        <position position="450"/>
    </location>
    <ligand>
        <name>Ca(2+)</name>
        <dbReference type="ChEBI" id="CHEBI:29108"/>
        <label>2</label>
    </ligand>
</feature>
<feature type="binding site" evidence="2">
    <location>
        <position position="456"/>
    </location>
    <ligand>
        <name>Ca(2+)</name>
        <dbReference type="ChEBI" id="CHEBI:29108"/>
        <label>1</label>
    </ligand>
</feature>
<feature type="binding site" evidence="2">
    <location>
        <position position="509"/>
    </location>
    <ligand>
        <name>Ca(2+)</name>
        <dbReference type="ChEBI" id="CHEBI:29108"/>
        <label>1</label>
    </ligand>
</feature>
<feature type="binding site" evidence="2">
    <location>
        <position position="509"/>
    </location>
    <ligand>
        <name>Ca(2+)</name>
        <dbReference type="ChEBI" id="CHEBI:29108"/>
        <label>2</label>
    </ligand>
</feature>
<feature type="binding site" evidence="2">
    <location>
        <position position="511"/>
    </location>
    <ligand>
        <name>Ca(2+)</name>
        <dbReference type="ChEBI" id="CHEBI:29108"/>
        <label>1</label>
    </ligand>
</feature>
<feature type="binding site" evidence="2">
    <location>
        <position position="511"/>
    </location>
    <ligand>
        <name>Ca(2+)</name>
        <dbReference type="ChEBI" id="CHEBI:29108"/>
        <label>2</label>
    </ligand>
</feature>
<feature type="binding site" evidence="2">
    <location>
        <position position="517"/>
    </location>
    <ligand>
        <name>Ca(2+)</name>
        <dbReference type="ChEBI" id="CHEBI:29108"/>
        <label>2</label>
    </ligand>
</feature>
<feature type="sequence conflict" description="In Ref. 4; AAC48991." evidence="6" ref="4">
    <original>L</original>
    <variation>R</variation>
    <location>
        <position position="526"/>
    </location>
</feature>
<protein>
    <recommendedName>
        <fullName>Phosphoinositide phospholipase C 3</fullName>
        <ecNumber>3.1.4.11</ecNumber>
    </recommendedName>
    <alternativeName>
        <fullName>Phosphoinositide phospholipase PLC3</fullName>
        <shortName>AtPLC1F</shortName>
        <shortName>AtPLC3</shortName>
        <shortName>PI-PLC3</shortName>
    </alternativeName>
</protein>
<evidence type="ECO:0000250" key="1"/>
<evidence type="ECO:0000255" key="2">
    <source>
        <dbReference type="PROSITE-ProRule" id="PRU00041"/>
    </source>
</evidence>
<evidence type="ECO:0000255" key="3">
    <source>
        <dbReference type="PROSITE-ProRule" id="PRU00270"/>
    </source>
</evidence>
<evidence type="ECO:0000255" key="4">
    <source>
        <dbReference type="PROSITE-ProRule" id="PRU00271"/>
    </source>
</evidence>
<evidence type="ECO:0000269" key="5">
    <source ref="6"/>
</evidence>
<evidence type="ECO:0000305" key="6"/>